<gene>
    <name type="primary">hlv</name>
</gene>
<keyword id="KW-0044">Antibiotic</keyword>
<keyword id="KW-0929">Antimicrobial</keyword>
<keyword id="KW-0078">Bacteriocin</keyword>
<accession>P22294</accession>
<protein>
    <recommendedName>
        <fullName>Bacteriocin helveticin-J</fullName>
    </recommendedName>
</protein>
<organism>
    <name type="scientific">Lactobacillus helveticus</name>
    <name type="common">Lactobacillus suntoryeus</name>
    <dbReference type="NCBI Taxonomy" id="1587"/>
    <lineage>
        <taxon>Bacteria</taxon>
        <taxon>Bacillati</taxon>
        <taxon>Bacillota</taxon>
        <taxon>Bacilli</taxon>
        <taxon>Lactobacillales</taxon>
        <taxon>Lactobacillaceae</taxon>
        <taxon>Lactobacillus</taxon>
    </lineage>
</organism>
<proteinExistence type="predicted"/>
<reference key="1">
    <citation type="journal article" date="1990" name="J. Bacteriol.">
        <title>Cloning, expression, and nucleotide sequence of the Lactobacillus helveticus 481 gene encoding the bacteriocin helveticin J.</title>
        <authorList>
            <person name="Joerger M.C."/>
            <person name="Klaenhammer T.R."/>
        </authorList>
    </citation>
    <scope>NUCLEOTIDE SEQUENCE [GENOMIC DNA]</scope>
    <source>
        <strain>481</strain>
    </source>
</reference>
<sequence length="333" mass="37512">MKHLNETTNVRILSQFDMDTGYQAVVQKGNVGSKYVYGLQLRKGATTILRGYRGSKINNPILELSGQAGGHTQTWEFAGDRKDINGEERAGQWFIGVKPSKIEGSKIIWAKQIARVDLRNQMGPHYSNTDFPRLSYLNRAGSNPFAGNKMTHAEAAVSPDYTKFLIATVENNCIGHFTIYNLDTINEKLDEKGNSEDVNLETVKYEDSFIIDNLYGDDNNSIVNSIQGYDLDNDGNIYISSQKAPDFDGSYYAHHKQIVKIPYYARSKESEDQWRAVNLSEFGGLDIPGKHSEVESIQIIGENHCYLTVAYHSKNKAGENKTTLNEIYELSWN</sequence>
<feature type="chain" id="PRO_0000110580" description="Bacteriocin helveticin-J">
    <location>
        <begin position="1"/>
        <end position="333"/>
    </location>
</feature>
<dbReference type="EMBL" id="M59360">
    <property type="protein sequence ID" value="AAA63274.1"/>
    <property type="molecule type" value="Genomic_DNA"/>
</dbReference>
<dbReference type="PIR" id="C37145">
    <property type="entry name" value="C37145"/>
</dbReference>
<dbReference type="RefSeq" id="WP_025006474.1">
    <property type="nucleotide sequence ID" value="NZ_RIQF01000232.1"/>
</dbReference>
<dbReference type="GO" id="GO:0042742">
    <property type="term" value="P:defense response to bacterium"/>
    <property type="evidence" value="ECO:0007669"/>
    <property type="project" value="UniProtKB-KW"/>
</dbReference>
<dbReference type="GO" id="GO:0031640">
    <property type="term" value="P:killing of cells of another organism"/>
    <property type="evidence" value="ECO:0007669"/>
    <property type="project" value="UniProtKB-KW"/>
</dbReference>
<dbReference type="InterPro" id="IPR035280">
    <property type="entry name" value="Helveticin_J"/>
</dbReference>
<dbReference type="Pfam" id="PF17312">
    <property type="entry name" value="Helveticin_J"/>
    <property type="match status" value="1"/>
</dbReference>
<name>HVTJ_LACHE</name>
<comment type="function">
    <text>This heat-sensitive bacteriocin inhibits the growth of closely related Lactobacillus species.</text>
</comment>